<protein>
    <recommendedName>
        <fullName>Unknown protein from spot P11 of 2D-PAGE of heart tissue</fullName>
    </recommendedName>
</protein>
<reference key="1">
    <citation type="submission" date="1998-09" db="UniProtKB">
        <authorList>
            <person name="Li X.-P."/>
            <person name="Pleissner K.-P."/>
            <person name="Scheler C."/>
            <person name="Regitz-Zagrosek V."/>
            <person name="Salikov J."/>
            <person name="Jungblut P.R."/>
        </authorList>
    </citation>
    <scope>PROTEIN SEQUENCE</scope>
    <source>
        <strain>Wistar</strain>
        <tissue>Heart</tissue>
    </source>
</reference>
<proteinExistence type="evidence at protein level"/>
<sequence>QSAREQG</sequence>
<accession>P56576</accession>
<organism>
    <name type="scientific">Rattus norvegicus</name>
    <name type="common">Rat</name>
    <dbReference type="NCBI Taxonomy" id="10116"/>
    <lineage>
        <taxon>Eukaryota</taxon>
        <taxon>Metazoa</taxon>
        <taxon>Chordata</taxon>
        <taxon>Craniata</taxon>
        <taxon>Vertebrata</taxon>
        <taxon>Euteleostomi</taxon>
        <taxon>Mammalia</taxon>
        <taxon>Eutheria</taxon>
        <taxon>Euarchontoglires</taxon>
        <taxon>Glires</taxon>
        <taxon>Rodentia</taxon>
        <taxon>Myomorpha</taxon>
        <taxon>Muroidea</taxon>
        <taxon>Muridae</taxon>
        <taxon>Murinae</taxon>
        <taxon>Rattus</taxon>
    </lineage>
</organism>
<keyword id="KW-0903">Direct protein sequencing</keyword>
<keyword id="KW-1185">Reference proteome</keyword>
<name>UH11_RAT</name>
<comment type="miscellaneous">
    <text>On the 2D-gel the determined pI of this unknown protein is: 8.5, its MW is: 42 kDa.</text>
</comment>
<dbReference type="InParanoid" id="P56576"/>
<dbReference type="Proteomes" id="UP000002494">
    <property type="component" value="Unplaced"/>
</dbReference>
<feature type="chain" id="PRO_0000055484" description="Unknown protein from spot P11 of 2D-PAGE of heart tissue">
    <location>
        <begin position="1"/>
        <end position="7" status="greater than"/>
    </location>
</feature>
<feature type="unsure residue" description="S or A">
    <location>
        <position position="2"/>
    </location>
</feature>
<feature type="non-terminal residue">
    <location>
        <position position="7"/>
    </location>
</feature>